<feature type="chain" id="PRO_1000189090" description="Small heat shock protein IbpA">
    <location>
        <begin position="1"/>
        <end position="137"/>
    </location>
</feature>
<feature type="domain" description="sHSP" evidence="2">
    <location>
        <begin position="28"/>
        <end position="137"/>
    </location>
</feature>
<reference key="1">
    <citation type="journal article" date="2011" name="J. Bacteriol.">
        <title>Comparative genomics of 28 Salmonella enterica isolates: evidence for CRISPR-mediated adaptive sublineage evolution.</title>
        <authorList>
            <person name="Fricke W.F."/>
            <person name="Mammel M.K."/>
            <person name="McDermott P.F."/>
            <person name="Tartera C."/>
            <person name="White D.G."/>
            <person name="Leclerc J.E."/>
            <person name="Ravel J."/>
            <person name="Cebula T.A."/>
        </authorList>
    </citation>
    <scope>NUCLEOTIDE SEQUENCE [LARGE SCALE GENOMIC DNA]</scope>
    <source>
        <strain>CVM19633</strain>
    </source>
</reference>
<proteinExistence type="inferred from homology"/>
<sequence>MRNFDLSPLYRSAIGFDRLFNLLENNQSQSNGGYPPYNVELVDENHYRIAIAVAGFAESELEITAQDNLLVVKGAHADEQKERTYLYQGIAERNFERKFQLAENIHVRGANLVNGLLYIELERVIPEANKPRRIEIN</sequence>
<dbReference type="EMBL" id="CP001127">
    <property type="protein sequence ID" value="ACF90018.1"/>
    <property type="molecule type" value="Genomic_DNA"/>
</dbReference>
<dbReference type="RefSeq" id="WP_001532742.1">
    <property type="nucleotide sequence ID" value="NC_011094.1"/>
</dbReference>
<dbReference type="SMR" id="B4TMX7"/>
<dbReference type="GeneID" id="84234411"/>
<dbReference type="KEGG" id="sew:SeSA_A4019"/>
<dbReference type="HOGENOM" id="CLU_046737_4_2_6"/>
<dbReference type="Proteomes" id="UP000001865">
    <property type="component" value="Chromosome"/>
</dbReference>
<dbReference type="GO" id="GO:0005737">
    <property type="term" value="C:cytoplasm"/>
    <property type="evidence" value="ECO:0007669"/>
    <property type="project" value="UniProtKB-SubCell"/>
</dbReference>
<dbReference type="GO" id="GO:0050821">
    <property type="term" value="P:protein stabilization"/>
    <property type="evidence" value="ECO:0007669"/>
    <property type="project" value="UniProtKB-UniRule"/>
</dbReference>
<dbReference type="CDD" id="cd06470">
    <property type="entry name" value="ACD_IbpA-B_like"/>
    <property type="match status" value="1"/>
</dbReference>
<dbReference type="FunFam" id="2.60.40.790:FF:000002">
    <property type="entry name" value="Small heat shock protein IbpA"/>
    <property type="match status" value="1"/>
</dbReference>
<dbReference type="Gene3D" id="2.60.40.790">
    <property type="match status" value="1"/>
</dbReference>
<dbReference type="HAMAP" id="MF_02000">
    <property type="entry name" value="HSP20_IbpA"/>
    <property type="match status" value="1"/>
</dbReference>
<dbReference type="InterPro" id="IPR002068">
    <property type="entry name" value="A-crystallin/Hsp20_dom"/>
</dbReference>
<dbReference type="InterPro" id="IPR037913">
    <property type="entry name" value="ACD_IbpA/B"/>
</dbReference>
<dbReference type="InterPro" id="IPR008978">
    <property type="entry name" value="HSP20-like_chaperone"/>
</dbReference>
<dbReference type="InterPro" id="IPR023728">
    <property type="entry name" value="HSP20_IbpA"/>
</dbReference>
<dbReference type="NCBIfam" id="NF008013">
    <property type="entry name" value="PRK10743.1"/>
    <property type="match status" value="1"/>
</dbReference>
<dbReference type="PANTHER" id="PTHR47062">
    <property type="match status" value="1"/>
</dbReference>
<dbReference type="PANTHER" id="PTHR47062:SF1">
    <property type="entry name" value="SMALL HEAT SHOCK PROTEIN IBPA"/>
    <property type="match status" value="1"/>
</dbReference>
<dbReference type="Pfam" id="PF00011">
    <property type="entry name" value="HSP20"/>
    <property type="match status" value="1"/>
</dbReference>
<dbReference type="SUPFAM" id="SSF49764">
    <property type="entry name" value="HSP20-like chaperones"/>
    <property type="match status" value="1"/>
</dbReference>
<dbReference type="PROSITE" id="PS01031">
    <property type="entry name" value="SHSP"/>
    <property type="match status" value="1"/>
</dbReference>
<comment type="function">
    <text evidence="1">Associates with aggregated proteins, together with IbpB, to stabilize and protect them from irreversible denaturation and extensive proteolysis during heat shock and oxidative stress. Aggregated proteins bound to the IbpAB complex are more efficiently refolded and reactivated by the ATP-dependent chaperone systems ClpB and DnaK/DnaJ/GrpE. Its activity is ATP-independent.</text>
</comment>
<comment type="subunit">
    <text evidence="1">Monomer. Forms homomultimers of about 100-150 subunits at optimal growth temperatures. Conformation changes to monomers at high temperatures or high ionic concentrations.</text>
</comment>
<comment type="subcellular location">
    <subcellularLocation>
        <location evidence="1">Cytoplasm</location>
    </subcellularLocation>
</comment>
<comment type="similarity">
    <text evidence="1 2">Belongs to the small heat shock protein (HSP20) family.</text>
</comment>
<accession>B4TMX7</accession>
<evidence type="ECO:0000255" key="1">
    <source>
        <dbReference type="HAMAP-Rule" id="MF_02000"/>
    </source>
</evidence>
<evidence type="ECO:0000255" key="2">
    <source>
        <dbReference type="PROSITE-ProRule" id="PRU00285"/>
    </source>
</evidence>
<protein>
    <recommendedName>
        <fullName evidence="1">Small heat shock protein IbpA</fullName>
    </recommendedName>
    <alternativeName>
        <fullName evidence="1">16 kDa heat shock protein A</fullName>
    </alternativeName>
</protein>
<keyword id="KW-0143">Chaperone</keyword>
<keyword id="KW-0963">Cytoplasm</keyword>
<keyword id="KW-0346">Stress response</keyword>
<name>IBPA_SALSV</name>
<gene>
    <name evidence="1" type="primary">ibpA</name>
    <name type="ordered locus">SeSA_A4019</name>
</gene>
<organism>
    <name type="scientific">Salmonella schwarzengrund (strain CVM19633)</name>
    <dbReference type="NCBI Taxonomy" id="439843"/>
    <lineage>
        <taxon>Bacteria</taxon>
        <taxon>Pseudomonadati</taxon>
        <taxon>Pseudomonadota</taxon>
        <taxon>Gammaproteobacteria</taxon>
        <taxon>Enterobacterales</taxon>
        <taxon>Enterobacteriaceae</taxon>
        <taxon>Salmonella</taxon>
    </lineage>
</organism>